<keyword id="KW-0067">ATP-binding</keyword>
<keyword id="KW-0324">Glycolysis</keyword>
<keyword id="KW-0418">Kinase</keyword>
<keyword id="KW-0460">Magnesium</keyword>
<keyword id="KW-0479">Metal-binding</keyword>
<keyword id="KW-0547">Nucleotide-binding</keyword>
<keyword id="KW-0597">Phosphoprotein</keyword>
<keyword id="KW-0630">Potassium</keyword>
<keyword id="KW-0670">Pyruvate</keyword>
<keyword id="KW-1185">Reference proteome</keyword>
<keyword id="KW-0808">Transferase</keyword>
<organism>
    <name type="scientific">Schizosaccharomyces pombe (strain 972 / ATCC 24843)</name>
    <name type="common">Fission yeast</name>
    <dbReference type="NCBI Taxonomy" id="284812"/>
    <lineage>
        <taxon>Eukaryota</taxon>
        <taxon>Fungi</taxon>
        <taxon>Dikarya</taxon>
        <taxon>Ascomycota</taxon>
        <taxon>Taphrinomycotina</taxon>
        <taxon>Schizosaccharomycetes</taxon>
        <taxon>Schizosaccharomycetales</taxon>
        <taxon>Schizosaccharomycetaceae</taxon>
        <taxon>Schizosaccharomyces</taxon>
    </lineage>
</organism>
<proteinExistence type="evidence at protein level"/>
<protein>
    <recommendedName>
        <fullName>Pyruvate kinase</fullName>
        <shortName>PK</shortName>
        <ecNumber>2.7.1.40</ecNumber>
    </recommendedName>
</protein>
<dbReference type="EC" id="2.7.1.40"/>
<dbReference type="EMBL" id="X91008">
    <property type="protein sequence ID" value="CAA62490.1"/>
    <property type="molecule type" value="mRNA"/>
</dbReference>
<dbReference type="EMBL" id="CU329670">
    <property type="protein sequence ID" value="CAA93349.1"/>
    <property type="molecule type" value="Genomic_DNA"/>
</dbReference>
<dbReference type="PIR" id="T38890">
    <property type="entry name" value="T38890"/>
</dbReference>
<dbReference type="PIR" id="T45166">
    <property type="entry name" value="T45166"/>
</dbReference>
<dbReference type="RefSeq" id="NP_594346.1">
    <property type="nucleotide sequence ID" value="NM_001019767.2"/>
</dbReference>
<dbReference type="SMR" id="Q10208"/>
<dbReference type="BioGRID" id="279974">
    <property type="interactions" value="9"/>
</dbReference>
<dbReference type="FunCoup" id="Q10208">
    <property type="interactions" value="460"/>
</dbReference>
<dbReference type="STRING" id="284812.Q10208"/>
<dbReference type="iPTMnet" id="Q10208"/>
<dbReference type="PaxDb" id="4896-SPAC4H3.10c.1"/>
<dbReference type="EnsemblFungi" id="SPAC4H3.10c.1">
    <property type="protein sequence ID" value="SPAC4H3.10c.1:pep"/>
    <property type="gene ID" value="SPAC4H3.10c"/>
</dbReference>
<dbReference type="GeneID" id="2543557"/>
<dbReference type="KEGG" id="spo:2543557"/>
<dbReference type="PomBase" id="SPAC4H3.10c">
    <property type="gene designation" value="pyk1"/>
</dbReference>
<dbReference type="VEuPathDB" id="FungiDB:SPAC4H3.10c"/>
<dbReference type="eggNOG" id="KOG2323">
    <property type="taxonomic scope" value="Eukaryota"/>
</dbReference>
<dbReference type="HOGENOM" id="CLU_015439_0_1_1"/>
<dbReference type="InParanoid" id="Q10208"/>
<dbReference type="OMA" id="RVHHIGE"/>
<dbReference type="PhylomeDB" id="Q10208"/>
<dbReference type="BRENDA" id="2.7.1.40">
    <property type="organism ID" value="5613"/>
</dbReference>
<dbReference type="Reactome" id="R-SPO-6798695">
    <property type="pathway name" value="Neutrophil degranulation"/>
</dbReference>
<dbReference type="Reactome" id="R-SPO-70171">
    <property type="pathway name" value="Glycolysis"/>
</dbReference>
<dbReference type="Reactome" id="R-SPO-70268">
    <property type="pathway name" value="Pyruvate metabolism"/>
</dbReference>
<dbReference type="Reactome" id="R-SPO-9861718">
    <property type="pathway name" value="Regulation of pyruvate metabolism"/>
</dbReference>
<dbReference type="UniPathway" id="UPA00109">
    <property type="reaction ID" value="UER00188"/>
</dbReference>
<dbReference type="PRO" id="PR:Q10208"/>
<dbReference type="Proteomes" id="UP000002485">
    <property type="component" value="Chromosome I"/>
</dbReference>
<dbReference type="GO" id="GO:0005737">
    <property type="term" value="C:cytoplasm"/>
    <property type="evidence" value="ECO:0000318"/>
    <property type="project" value="GO_Central"/>
</dbReference>
<dbReference type="GO" id="GO:0005829">
    <property type="term" value="C:cytosol"/>
    <property type="evidence" value="ECO:0007005"/>
    <property type="project" value="PomBase"/>
</dbReference>
<dbReference type="GO" id="GO:0005524">
    <property type="term" value="F:ATP binding"/>
    <property type="evidence" value="ECO:0007669"/>
    <property type="project" value="UniProtKB-KW"/>
</dbReference>
<dbReference type="GO" id="GO:0016301">
    <property type="term" value="F:kinase activity"/>
    <property type="evidence" value="ECO:0007669"/>
    <property type="project" value="UniProtKB-KW"/>
</dbReference>
<dbReference type="GO" id="GO:0000287">
    <property type="term" value="F:magnesium ion binding"/>
    <property type="evidence" value="ECO:0007669"/>
    <property type="project" value="InterPro"/>
</dbReference>
<dbReference type="GO" id="GO:0030955">
    <property type="term" value="F:potassium ion binding"/>
    <property type="evidence" value="ECO:0007669"/>
    <property type="project" value="InterPro"/>
</dbReference>
<dbReference type="GO" id="GO:0004743">
    <property type="term" value="F:pyruvate kinase activity"/>
    <property type="evidence" value="ECO:0000314"/>
    <property type="project" value="PomBase"/>
</dbReference>
<dbReference type="GO" id="GO:0061621">
    <property type="term" value="P:canonical glycolysis"/>
    <property type="evidence" value="ECO:0000314"/>
    <property type="project" value="PomBase"/>
</dbReference>
<dbReference type="GO" id="GO:0006096">
    <property type="term" value="P:glycolytic process"/>
    <property type="evidence" value="ECO:0000318"/>
    <property type="project" value="GO_Central"/>
</dbReference>
<dbReference type="CDD" id="cd00288">
    <property type="entry name" value="Pyruvate_Kinase"/>
    <property type="match status" value="1"/>
</dbReference>
<dbReference type="FunFam" id="2.40.33.10:FF:000001">
    <property type="entry name" value="Pyruvate kinase"/>
    <property type="match status" value="1"/>
</dbReference>
<dbReference type="FunFam" id="3.20.20.60:FF:000025">
    <property type="entry name" value="Pyruvate kinase"/>
    <property type="match status" value="1"/>
</dbReference>
<dbReference type="Gene3D" id="3.20.20.60">
    <property type="entry name" value="Phosphoenolpyruvate-binding domains"/>
    <property type="match status" value="1"/>
</dbReference>
<dbReference type="Gene3D" id="2.40.33.10">
    <property type="entry name" value="PK beta-barrel domain-like"/>
    <property type="match status" value="1"/>
</dbReference>
<dbReference type="Gene3D" id="3.40.1380.20">
    <property type="entry name" value="Pyruvate kinase, C-terminal domain"/>
    <property type="match status" value="1"/>
</dbReference>
<dbReference type="InterPro" id="IPR001697">
    <property type="entry name" value="Pyr_Knase"/>
</dbReference>
<dbReference type="InterPro" id="IPR015813">
    <property type="entry name" value="Pyrv/PenolPyrv_kinase-like_dom"/>
</dbReference>
<dbReference type="InterPro" id="IPR040442">
    <property type="entry name" value="Pyrv_kinase-like_dom_sf"/>
</dbReference>
<dbReference type="InterPro" id="IPR011037">
    <property type="entry name" value="Pyrv_Knase-like_insert_dom_sf"/>
</dbReference>
<dbReference type="InterPro" id="IPR018209">
    <property type="entry name" value="Pyrv_Knase_AS"/>
</dbReference>
<dbReference type="InterPro" id="IPR015793">
    <property type="entry name" value="Pyrv_Knase_brl"/>
</dbReference>
<dbReference type="InterPro" id="IPR015795">
    <property type="entry name" value="Pyrv_Knase_C"/>
</dbReference>
<dbReference type="InterPro" id="IPR036918">
    <property type="entry name" value="Pyrv_Knase_C_sf"/>
</dbReference>
<dbReference type="InterPro" id="IPR015806">
    <property type="entry name" value="Pyrv_Knase_insert_dom_sf"/>
</dbReference>
<dbReference type="NCBIfam" id="NF004491">
    <property type="entry name" value="PRK05826.1"/>
    <property type="match status" value="1"/>
</dbReference>
<dbReference type="NCBIfam" id="NF004978">
    <property type="entry name" value="PRK06354.1"/>
    <property type="match status" value="1"/>
</dbReference>
<dbReference type="NCBIfam" id="TIGR01064">
    <property type="entry name" value="pyruv_kin"/>
    <property type="match status" value="1"/>
</dbReference>
<dbReference type="PANTHER" id="PTHR11817">
    <property type="entry name" value="PYRUVATE KINASE"/>
    <property type="match status" value="1"/>
</dbReference>
<dbReference type="Pfam" id="PF00224">
    <property type="entry name" value="PK"/>
    <property type="match status" value="1"/>
</dbReference>
<dbReference type="Pfam" id="PF02887">
    <property type="entry name" value="PK_C"/>
    <property type="match status" value="1"/>
</dbReference>
<dbReference type="PRINTS" id="PR01050">
    <property type="entry name" value="PYRUVTKNASE"/>
</dbReference>
<dbReference type="SUPFAM" id="SSF51621">
    <property type="entry name" value="Phosphoenolpyruvate/pyruvate domain"/>
    <property type="match status" value="1"/>
</dbReference>
<dbReference type="SUPFAM" id="SSF50800">
    <property type="entry name" value="PK beta-barrel domain-like"/>
    <property type="match status" value="1"/>
</dbReference>
<dbReference type="SUPFAM" id="SSF52935">
    <property type="entry name" value="PK C-terminal domain-like"/>
    <property type="match status" value="1"/>
</dbReference>
<dbReference type="PROSITE" id="PS00110">
    <property type="entry name" value="PYRUVATE_KINASE"/>
    <property type="match status" value="1"/>
</dbReference>
<evidence type="ECO:0000250" key="1"/>
<evidence type="ECO:0000250" key="2">
    <source>
        <dbReference type="UniProtKB" id="P14618"/>
    </source>
</evidence>
<evidence type="ECO:0000255" key="3"/>
<evidence type="ECO:0000269" key="4">
    <source>
    </source>
</evidence>
<evidence type="ECO:0000305" key="5"/>
<reference key="1">
    <citation type="journal article" date="1995" name="FEMS Microbiol. Lett.">
        <title>Cloning and sequencing of a gene encoding pyruvate kinase from Schizosaccharomyces pombe; implications for quaternary structure and regulation of the enzyme.</title>
        <authorList>
            <person name="Nairn J."/>
            <person name="Smith S."/>
            <person name="Allison P.J."/>
            <person name="Rigden D."/>
            <person name="Fothergill-Gilmore L.A."/>
            <person name="Price N.C."/>
        </authorList>
    </citation>
    <scope>NUCLEOTIDE SEQUENCE [MRNA]</scope>
</reference>
<reference key="2">
    <citation type="journal article" date="2002" name="Nature">
        <title>The genome sequence of Schizosaccharomyces pombe.</title>
        <authorList>
            <person name="Wood V."/>
            <person name="Gwilliam R."/>
            <person name="Rajandream M.A."/>
            <person name="Lyne M.H."/>
            <person name="Lyne R."/>
            <person name="Stewart A."/>
            <person name="Sgouros J.G."/>
            <person name="Peat N."/>
            <person name="Hayles J."/>
            <person name="Baker S.G."/>
            <person name="Basham D."/>
            <person name="Bowman S."/>
            <person name="Brooks K."/>
            <person name="Brown D."/>
            <person name="Brown S."/>
            <person name="Chillingworth T."/>
            <person name="Churcher C.M."/>
            <person name="Collins M."/>
            <person name="Connor R."/>
            <person name="Cronin A."/>
            <person name="Davis P."/>
            <person name="Feltwell T."/>
            <person name="Fraser A."/>
            <person name="Gentles S."/>
            <person name="Goble A."/>
            <person name="Hamlin N."/>
            <person name="Harris D.E."/>
            <person name="Hidalgo J."/>
            <person name="Hodgson G."/>
            <person name="Holroyd S."/>
            <person name="Hornsby T."/>
            <person name="Howarth S."/>
            <person name="Huckle E.J."/>
            <person name="Hunt S."/>
            <person name="Jagels K."/>
            <person name="James K.D."/>
            <person name="Jones L."/>
            <person name="Jones M."/>
            <person name="Leather S."/>
            <person name="McDonald S."/>
            <person name="McLean J."/>
            <person name="Mooney P."/>
            <person name="Moule S."/>
            <person name="Mungall K.L."/>
            <person name="Murphy L.D."/>
            <person name="Niblett D."/>
            <person name="Odell C."/>
            <person name="Oliver K."/>
            <person name="O'Neil S."/>
            <person name="Pearson D."/>
            <person name="Quail M.A."/>
            <person name="Rabbinowitsch E."/>
            <person name="Rutherford K.M."/>
            <person name="Rutter S."/>
            <person name="Saunders D."/>
            <person name="Seeger K."/>
            <person name="Sharp S."/>
            <person name="Skelton J."/>
            <person name="Simmonds M.N."/>
            <person name="Squares R."/>
            <person name="Squares S."/>
            <person name="Stevens K."/>
            <person name="Taylor K."/>
            <person name="Taylor R.G."/>
            <person name="Tivey A."/>
            <person name="Walsh S.V."/>
            <person name="Warren T."/>
            <person name="Whitehead S."/>
            <person name="Woodward J.R."/>
            <person name="Volckaert G."/>
            <person name="Aert R."/>
            <person name="Robben J."/>
            <person name="Grymonprez B."/>
            <person name="Weltjens I."/>
            <person name="Vanstreels E."/>
            <person name="Rieger M."/>
            <person name="Schaefer M."/>
            <person name="Mueller-Auer S."/>
            <person name="Gabel C."/>
            <person name="Fuchs M."/>
            <person name="Duesterhoeft A."/>
            <person name="Fritzc C."/>
            <person name="Holzer E."/>
            <person name="Moestl D."/>
            <person name="Hilbert H."/>
            <person name="Borzym K."/>
            <person name="Langer I."/>
            <person name="Beck A."/>
            <person name="Lehrach H."/>
            <person name="Reinhardt R."/>
            <person name="Pohl T.M."/>
            <person name="Eger P."/>
            <person name="Zimmermann W."/>
            <person name="Wedler H."/>
            <person name="Wambutt R."/>
            <person name="Purnelle B."/>
            <person name="Goffeau A."/>
            <person name="Cadieu E."/>
            <person name="Dreano S."/>
            <person name="Gloux S."/>
            <person name="Lelaure V."/>
            <person name="Mottier S."/>
            <person name="Galibert F."/>
            <person name="Aves S.J."/>
            <person name="Xiang Z."/>
            <person name="Hunt C."/>
            <person name="Moore K."/>
            <person name="Hurst S.M."/>
            <person name="Lucas M."/>
            <person name="Rochet M."/>
            <person name="Gaillardin C."/>
            <person name="Tallada V.A."/>
            <person name="Garzon A."/>
            <person name="Thode G."/>
            <person name="Daga R.R."/>
            <person name="Cruzado L."/>
            <person name="Jimenez J."/>
            <person name="Sanchez M."/>
            <person name="del Rey F."/>
            <person name="Benito J."/>
            <person name="Dominguez A."/>
            <person name="Revuelta J.L."/>
            <person name="Moreno S."/>
            <person name="Armstrong J."/>
            <person name="Forsburg S.L."/>
            <person name="Cerutti L."/>
            <person name="Lowe T."/>
            <person name="McCombie W.R."/>
            <person name="Paulsen I."/>
            <person name="Potashkin J."/>
            <person name="Shpakovski G.V."/>
            <person name="Ussery D."/>
            <person name="Barrell B.G."/>
            <person name="Nurse P."/>
        </authorList>
    </citation>
    <scope>NUCLEOTIDE SEQUENCE [LARGE SCALE GENOMIC DNA]</scope>
    <source>
        <strain>972 / ATCC 24843</strain>
    </source>
</reference>
<reference key="3">
    <citation type="journal article" date="2008" name="J. Proteome Res.">
        <title>Phosphoproteome analysis of fission yeast.</title>
        <authorList>
            <person name="Wilson-Grady J.T."/>
            <person name="Villen J."/>
            <person name="Gygi S.P."/>
        </authorList>
    </citation>
    <scope>PHOSPHORYLATION [LARGE SCALE ANALYSIS] AT SER-29; SER-63; SER-281 AND SER-412</scope>
    <scope>IDENTIFICATION BY MASS SPECTROMETRY</scope>
</reference>
<accession>Q10208</accession>
<name>KPYK_SCHPO</name>
<comment type="catalytic activity">
    <reaction>
        <text>pyruvate + ATP = phosphoenolpyruvate + ADP + H(+)</text>
        <dbReference type="Rhea" id="RHEA:18157"/>
        <dbReference type="ChEBI" id="CHEBI:15361"/>
        <dbReference type="ChEBI" id="CHEBI:15378"/>
        <dbReference type="ChEBI" id="CHEBI:30616"/>
        <dbReference type="ChEBI" id="CHEBI:58702"/>
        <dbReference type="ChEBI" id="CHEBI:456216"/>
        <dbReference type="EC" id="2.7.1.40"/>
    </reaction>
</comment>
<comment type="cofactor">
    <cofactor>
        <name>Mg(2+)</name>
        <dbReference type="ChEBI" id="CHEBI:18420"/>
    </cofactor>
</comment>
<comment type="cofactor">
    <cofactor>
        <name>K(+)</name>
        <dbReference type="ChEBI" id="CHEBI:29103"/>
    </cofactor>
</comment>
<comment type="pathway">
    <text>Carbohydrate degradation; glycolysis; pyruvate from D-glyceraldehyde 3-phosphate: step 5/5.</text>
</comment>
<comment type="subunit">
    <text evidence="1">Homotetramer.</text>
</comment>
<comment type="similarity">
    <text evidence="5">Belongs to the pyruvate kinase family.</text>
</comment>
<sequence>MSSSAVSPKQWVAGLNSELDIPAVNRRTSIICTIGPKSNNVETLCKLRDAGMNIVRMNFSHGSYEYHQSVIDNARKASATNPLFPLAIALDTKGPEIRTGLTVGGTDYPISSGHEMIFTTDDAYAEKCNDKVMYIDYKNITKVIQPGRIIYVDDGILSFTVIEKVDDKNLKVRVNNNGKISSKKGVNLPKTDVDLPALSEKDKADLRFGVKNGVDMIFASFIRRAEDVIHIREVLGEEGKNIKIICKIENQQGVNNFDSILDVTDGIMVARGDLGIEIPASQVFVAQKMMIAKCNIAGKPVACATQMLESMTYNPRPTRAEVSDVGNAVLDGADLVMLSGETTKGSYPVEAVTYMAETARVAEASIPYGSLYQEMFGLVRRPLECATETTAVAAIGASIESDAKAIVVLSTSGNTARLCSKYRPSIPIVMVTRCPQRARQSHLNRGVYPVIYEKEPLSDWQKDVDARVAYGCQQAYKMNILKKGDKIIVLQGAVGGKGHTSIFRLTVAE</sequence>
<gene>
    <name type="primary">pyk1</name>
    <name type="ORF">SPAC4H3.10c</name>
</gene>
<feature type="chain" id="PRO_0000112118" description="Pyruvate kinase">
    <location>
        <begin position="1"/>
        <end position="509"/>
    </location>
</feature>
<feature type="binding site" evidence="1">
    <location>
        <position position="56"/>
    </location>
    <ligand>
        <name>substrate</name>
    </ligand>
</feature>
<feature type="binding site" evidence="2">
    <location>
        <begin position="58"/>
        <end position="61"/>
    </location>
    <ligand>
        <name>ATP</name>
        <dbReference type="ChEBI" id="CHEBI:30616"/>
    </ligand>
</feature>
<feature type="binding site" evidence="1">
    <location>
        <position position="58"/>
    </location>
    <ligand>
        <name>K(+)</name>
        <dbReference type="ChEBI" id="CHEBI:29103"/>
    </ligand>
</feature>
<feature type="binding site" evidence="1">
    <location>
        <position position="60"/>
    </location>
    <ligand>
        <name>K(+)</name>
        <dbReference type="ChEBI" id="CHEBI:29103"/>
    </ligand>
</feature>
<feature type="binding site" evidence="1">
    <location>
        <position position="91"/>
    </location>
    <ligand>
        <name>K(+)</name>
        <dbReference type="ChEBI" id="CHEBI:29103"/>
    </ligand>
</feature>
<feature type="binding site" evidence="1">
    <location>
        <position position="92"/>
    </location>
    <ligand>
        <name>K(+)</name>
        <dbReference type="ChEBI" id="CHEBI:29103"/>
    </ligand>
</feature>
<feature type="binding site" evidence="2">
    <location>
        <position position="98"/>
    </location>
    <ligand>
        <name>ATP</name>
        <dbReference type="ChEBI" id="CHEBI:30616"/>
    </ligand>
</feature>
<feature type="binding site" evidence="2">
    <location>
        <position position="184"/>
    </location>
    <ligand>
        <name>ATP</name>
        <dbReference type="ChEBI" id="CHEBI:30616"/>
    </ligand>
</feature>
<feature type="binding site" evidence="3">
    <location>
        <position position="249"/>
    </location>
    <ligand>
        <name>Mg(2+)</name>
        <dbReference type="ChEBI" id="CHEBI:18420"/>
    </ligand>
</feature>
<feature type="binding site" evidence="1">
    <location>
        <position position="272"/>
    </location>
    <ligand>
        <name>substrate</name>
    </ligand>
</feature>
<feature type="binding site" evidence="1">
    <location>
        <position position="273"/>
    </location>
    <ligand>
        <name>Mg(2+)</name>
        <dbReference type="ChEBI" id="CHEBI:18420"/>
    </ligand>
</feature>
<feature type="binding site" evidence="1">
    <location>
        <position position="273"/>
    </location>
    <ligand>
        <name>substrate</name>
    </ligand>
</feature>
<feature type="binding site" evidence="1">
    <location>
        <position position="305"/>
    </location>
    <ligand>
        <name>substrate</name>
    </ligand>
</feature>
<feature type="site" description="Transition state stabilizer" evidence="1">
    <location>
        <position position="247"/>
    </location>
</feature>
<feature type="modified residue" description="Phosphoserine" evidence="4">
    <location>
        <position position="29"/>
    </location>
</feature>
<feature type="modified residue" description="Phosphoserine" evidence="4">
    <location>
        <position position="63"/>
    </location>
</feature>
<feature type="modified residue" description="Phosphoserine" evidence="4">
    <location>
        <position position="281"/>
    </location>
</feature>
<feature type="modified residue" description="Phosphoserine" evidence="4">
    <location>
        <position position="412"/>
    </location>
</feature>
<feature type="sequence conflict" description="In Ref. 1; CAA62490." evidence="5" ref="1">
    <original>A</original>
    <variation>R</variation>
    <location>
        <position position="391"/>
    </location>
</feature>